<evidence type="ECO:0000255" key="1">
    <source>
        <dbReference type="HAMAP-Rule" id="MF_00406"/>
    </source>
</evidence>
<sequence length="149" mass="16465">MLEAWQIQEIIPHRYPFLLVDRIIEIEWGQRAVGIKNVTVNEPFFVGHFPGNPVMPGVLIIEALAQVGAVALLGHPQYRDKTAFFAGIDGVRFKRPVRPGDTLRLEVQIGKVRRNIGTGTGRATVDGELAAEGEILFALLDPEAARTTR</sequence>
<accession>B9KYV7</accession>
<keyword id="KW-0963">Cytoplasm</keyword>
<keyword id="KW-0441">Lipid A biosynthesis</keyword>
<keyword id="KW-0444">Lipid biosynthesis</keyword>
<keyword id="KW-0443">Lipid metabolism</keyword>
<keyword id="KW-0456">Lyase</keyword>
<keyword id="KW-1185">Reference proteome</keyword>
<organism>
    <name type="scientific">Thermomicrobium roseum (strain ATCC 27502 / DSM 5159 / P-2)</name>
    <dbReference type="NCBI Taxonomy" id="309801"/>
    <lineage>
        <taxon>Bacteria</taxon>
        <taxon>Pseudomonadati</taxon>
        <taxon>Thermomicrobiota</taxon>
        <taxon>Thermomicrobia</taxon>
        <taxon>Thermomicrobiales</taxon>
        <taxon>Thermomicrobiaceae</taxon>
        <taxon>Thermomicrobium</taxon>
    </lineage>
</organism>
<name>FABZ_THERP</name>
<reference key="1">
    <citation type="journal article" date="2009" name="PLoS ONE">
        <title>Complete genome sequence of the aerobic CO-oxidizing thermophile Thermomicrobium roseum.</title>
        <authorList>
            <person name="Wu D."/>
            <person name="Raymond J."/>
            <person name="Wu M."/>
            <person name="Chatterji S."/>
            <person name="Ren Q."/>
            <person name="Graham J.E."/>
            <person name="Bryant D.A."/>
            <person name="Robb F."/>
            <person name="Colman A."/>
            <person name="Tallon L.J."/>
            <person name="Badger J.H."/>
            <person name="Madupu R."/>
            <person name="Ward N.L."/>
            <person name="Eisen J.A."/>
        </authorList>
    </citation>
    <scope>NUCLEOTIDE SEQUENCE [LARGE SCALE GENOMIC DNA]</scope>
    <source>
        <strain>ATCC 27502 / DSM 5159 / P-2</strain>
    </source>
</reference>
<gene>
    <name evidence="1" type="primary">fabZ</name>
    <name type="ordered locus">trd_0661</name>
</gene>
<proteinExistence type="inferred from homology"/>
<dbReference type="EC" id="4.2.1.59" evidence="1"/>
<dbReference type="EMBL" id="CP001275">
    <property type="protein sequence ID" value="ACM06280.1"/>
    <property type="molecule type" value="Genomic_DNA"/>
</dbReference>
<dbReference type="RefSeq" id="WP_012642057.1">
    <property type="nucleotide sequence ID" value="NC_011959.1"/>
</dbReference>
<dbReference type="SMR" id="B9KYV7"/>
<dbReference type="STRING" id="309801.trd_0661"/>
<dbReference type="KEGG" id="tro:trd_0661"/>
<dbReference type="eggNOG" id="COG0764">
    <property type="taxonomic scope" value="Bacteria"/>
</dbReference>
<dbReference type="HOGENOM" id="CLU_078912_3_0_0"/>
<dbReference type="OrthoDB" id="9772788at2"/>
<dbReference type="Proteomes" id="UP000000447">
    <property type="component" value="Chromosome"/>
</dbReference>
<dbReference type="GO" id="GO:0005737">
    <property type="term" value="C:cytoplasm"/>
    <property type="evidence" value="ECO:0007669"/>
    <property type="project" value="UniProtKB-SubCell"/>
</dbReference>
<dbReference type="GO" id="GO:0016020">
    <property type="term" value="C:membrane"/>
    <property type="evidence" value="ECO:0007669"/>
    <property type="project" value="GOC"/>
</dbReference>
<dbReference type="GO" id="GO:0019171">
    <property type="term" value="F:(3R)-hydroxyacyl-[acyl-carrier-protein] dehydratase activity"/>
    <property type="evidence" value="ECO:0007669"/>
    <property type="project" value="UniProtKB-EC"/>
</dbReference>
<dbReference type="GO" id="GO:0006633">
    <property type="term" value="P:fatty acid biosynthetic process"/>
    <property type="evidence" value="ECO:0007669"/>
    <property type="project" value="UniProtKB-UniRule"/>
</dbReference>
<dbReference type="GO" id="GO:0009245">
    <property type="term" value="P:lipid A biosynthetic process"/>
    <property type="evidence" value="ECO:0007669"/>
    <property type="project" value="UniProtKB-UniRule"/>
</dbReference>
<dbReference type="CDD" id="cd01288">
    <property type="entry name" value="FabZ"/>
    <property type="match status" value="1"/>
</dbReference>
<dbReference type="FunFam" id="3.10.129.10:FF:000001">
    <property type="entry name" value="3-hydroxyacyl-[acyl-carrier-protein] dehydratase FabZ"/>
    <property type="match status" value="1"/>
</dbReference>
<dbReference type="Gene3D" id="3.10.129.10">
    <property type="entry name" value="Hotdog Thioesterase"/>
    <property type="match status" value="1"/>
</dbReference>
<dbReference type="HAMAP" id="MF_00406">
    <property type="entry name" value="FabZ"/>
    <property type="match status" value="1"/>
</dbReference>
<dbReference type="InterPro" id="IPR013114">
    <property type="entry name" value="FabA_FabZ"/>
</dbReference>
<dbReference type="InterPro" id="IPR010084">
    <property type="entry name" value="FabZ"/>
</dbReference>
<dbReference type="InterPro" id="IPR029069">
    <property type="entry name" value="HotDog_dom_sf"/>
</dbReference>
<dbReference type="NCBIfam" id="TIGR01750">
    <property type="entry name" value="fabZ"/>
    <property type="match status" value="1"/>
</dbReference>
<dbReference type="NCBIfam" id="NF000582">
    <property type="entry name" value="PRK00006.1"/>
    <property type="match status" value="1"/>
</dbReference>
<dbReference type="PANTHER" id="PTHR30272">
    <property type="entry name" value="3-HYDROXYACYL-[ACYL-CARRIER-PROTEIN] DEHYDRATASE"/>
    <property type="match status" value="1"/>
</dbReference>
<dbReference type="PANTHER" id="PTHR30272:SF1">
    <property type="entry name" value="3-HYDROXYACYL-[ACYL-CARRIER-PROTEIN] DEHYDRATASE"/>
    <property type="match status" value="1"/>
</dbReference>
<dbReference type="Pfam" id="PF07977">
    <property type="entry name" value="FabA"/>
    <property type="match status" value="1"/>
</dbReference>
<dbReference type="SUPFAM" id="SSF54637">
    <property type="entry name" value="Thioesterase/thiol ester dehydrase-isomerase"/>
    <property type="match status" value="1"/>
</dbReference>
<comment type="function">
    <text evidence="1">Involved in unsaturated fatty acids biosynthesis. Catalyzes the dehydration of short chain beta-hydroxyacyl-ACPs and long chain saturated and unsaturated beta-hydroxyacyl-ACPs.</text>
</comment>
<comment type="catalytic activity">
    <reaction evidence="1">
        <text>a (3R)-hydroxyacyl-[ACP] = a (2E)-enoyl-[ACP] + H2O</text>
        <dbReference type="Rhea" id="RHEA:13097"/>
        <dbReference type="Rhea" id="RHEA-COMP:9925"/>
        <dbReference type="Rhea" id="RHEA-COMP:9945"/>
        <dbReference type="ChEBI" id="CHEBI:15377"/>
        <dbReference type="ChEBI" id="CHEBI:78784"/>
        <dbReference type="ChEBI" id="CHEBI:78827"/>
        <dbReference type="EC" id="4.2.1.59"/>
    </reaction>
</comment>
<comment type="subcellular location">
    <subcellularLocation>
        <location evidence="1">Cytoplasm</location>
    </subcellularLocation>
</comment>
<comment type="similarity">
    <text evidence="1">Belongs to the thioester dehydratase family. FabZ subfamily.</text>
</comment>
<feature type="chain" id="PRO_1000134720" description="3-hydroxyacyl-[acyl-carrier-protein] dehydratase FabZ">
    <location>
        <begin position="1"/>
        <end position="149"/>
    </location>
</feature>
<feature type="active site" evidence="1">
    <location>
        <position position="48"/>
    </location>
</feature>
<protein>
    <recommendedName>
        <fullName evidence="1">3-hydroxyacyl-[acyl-carrier-protein] dehydratase FabZ</fullName>
        <ecNumber evidence="1">4.2.1.59</ecNumber>
    </recommendedName>
    <alternativeName>
        <fullName evidence="1">(3R)-hydroxymyristoyl-[acyl-carrier-protein] dehydratase</fullName>
        <shortName evidence="1">(3R)-hydroxymyristoyl-ACP dehydrase</shortName>
    </alternativeName>
    <alternativeName>
        <fullName evidence="1">Beta-hydroxyacyl-ACP dehydratase</fullName>
    </alternativeName>
</protein>